<organism>
    <name type="scientific">Mus musculus</name>
    <name type="common">Mouse</name>
    <dbReference type="NCBI Taxonomy" id="10090"/>
    <lineage>
        <taxon>Eukaryota</taxon>
        <taxon>Metazoa</taxon>
        <taxon>Chordata</taxon>
        <taxon>Craniata</taxon>
        <taxon>Vertebrata</taxon>
        <taxon>Euteleostomi</taxon>
        <taxon>Mammalia</taxon>
        <taxon>Eutheria</taxon>
        <taxon>Euarchontoglires</taxon>
        <taxon>Glires</taxon>
        <taxon>Rodentia</taxon>
        <taxon>Myomorpha</taxon>
        <taxon>Muroidea</taxon>
        <taxon>Muridae</taxon>
        <taxon>Murinae</taxon>
        <taxon>Mus</taxon>
        <taxon>Mus</taxon>
    </lineage>
</organism>
<reference key="1">
    <citation type="journal article" date="1993" name="Virology">
        <title>Molecular cloning and characterization of PEBP2 beta, the heterodimeric partner of a novel Drosophila runt-related DNA binding protein PEBP2 alpha.</title>
        <authorList>
            <person name="Ogawa E."/>
            <person name="Inuzuka M."/>
            <person name="Maruyama M."/>
            <person name="Satake M."/>
            <person name="Naito-Fujimoto M."/>
            <person name="Ito Y."/>
            <person name="Shigesada K."/>
        </authorList>
    </citation>
    <scope>NUCLEOTIDE SEQUENCE [MRNA] (ISOFORMS 1; 2 AND 3)</scope>
    <scope>NUCLEOTIDE SEQUENCE [GENOMIC DNA] OF 1-26</scope>
    <scope>PROTEIN SEQUENCE OF 12-28 AND 95-98</scope>
</reference>
<reference key="2">
    <citation type="journal article" date="1993" name="Mol. Cell. Biol.">
        <title>Cloning and characterization of subunits of the T-cell receptor and murine leukemia virus enhancer core-binding factor.</title>
        <authorList>
            <person name="Wang S."/>
            <person name="Wang Q."/>
            <person name="Crute B.E."/>
            <person name="Melnikova I.N."/>
            <person name="Keller S.R."/>
            <person name="Speck N.A."/>
        </authorList>
    </citation>
    <scope>NUCLEOTIDE SEQUENCE [MRNA] (ISOFORMS 1; 2 AND 4)</scope>
    <scope>TISSUE SPECIFICITY</scope>
    <source>
        <tissue>Thymus</tissue>
    </source>
</reference>
<reference key="3">
    <citation type="journal article" date="2005" name="Science">
        <title>The transcriptional landscape of the mammalian genome.</title>
        <authorList>
            <person name="Carninci P."/>
            <person name="Kasukawa T."/>
            <person name="Katayama S."/>
            <person name="Gough J."/>
            <person name="Frith M.C."/>
            <person name="Maeda N."/>
            <person name="Oyama R."/>
            <person name="Ravasi T."/>
            <person name="Lenhard B."/>
            <person name="Wells C."/>
            <person name="Kodzius R."/>
            <person name="Shimokawa K."/>
            <person name="Bajic V.B."/>
            <person name="Brenner S.E."/>
            <person name="Batalov S."/>
            <person name="Forrest A.R."/>
            <person name="Zavolan M."/>
            <person name="Davis M.J."/>
            <person name="Wilming L.G."/>
            <person name="Aidinis V."/>
            <person name="Allen J.E."/>
            <person name="Ambesi-Impiombato A."/>
            <person name="Apweiler R."/>
            <person name="Aturaliya R.N."/>
            <person name="Bailey T.L."/>
            <person name="Bansal M."/>
            <person name="Baxter L."/>
            <person name="Beisel K.W."/>
            <person name="Bersano T."/>
            <person name="Bono H."/>
            <person name="Chalk A.M."/>
            <person name="Chiu K.P."/>
            <person name="Choudhary V."/>
            <person name="Christoffels A."/>
            <person name="Clutterbuck D.R."/>
            <person name="Crowe M.L."/>
            <person name="Dalla E."/>
            <person name="Dalrymple B.P."/>
            <person name="de Bono B."/>
            <person name="Della Gatta G."/>
            <person name="di Bernardo D."/>
            <person name="Down T."/>
            <person name="Engstrom P."/>
            <person name="Fagiolini M."/>
            <person name="Faulkner G."/>
            <person name="Fletcher C.F."/>
            <person name="Fukushima T."/>
            <person name="Furuno M."/>
            <person name="Futaki S."/>
            <person name="Gariboldi M."/>
            <person name="Georgii-Hemming P."/>
            <person name="Gingeras T.R."/>
            <person name="Gojobori T."/>
            <person name="Green R.E."/>
            <person name="Gustincich S."/>
            <person name="Harbers M."/>
            <person name="Hayashi Y."/>
            <person name="Hensch T.K."/>
            <person name="Hirokawa N."/>
            <person name="Hill D."/>
            <person name="Huminiecki L."/>
            <person name="Iacono M."/>
            <person name="Ikeo K."/>
            <person name="Iwama A."/>
            <person name="Ishikawa T."/>
            <person name="Jakt M."/>
            <person name="Kanapin A."/>
            <person name="Katoh M."/>
            <person name="Kawasawa Y."/>
            <person name="Kelso J."/>
            <person name="Kitamura H."/>
            <person name="Kitano H."/>
            <person name="Kollias G."/>
            <person name="Krishnan S.P."/>
            <person name="Kruger A."/>
            <person name="Kummerfeld S.K."/>
            <person name="Kurochkin I.V."/>
            <person name="Lareau L.F."/>
            <person name="Lazarevic D."/>
            <person name="Lipovich L."/>
            <person name="Liu J."/>
            <person name="Liuni S."/>
            <person name="McWilliam S."/>
            <person name="Madan Babu M."/>
            <person name="Madera M."/>
            <person name="Marchionni L."/>
            <person name="Matsuda H."/>
            <person name="Matsuzawa S."/>
            <person name="Miki H."/>
            <person name="Mignone F."/>
            <person name="Miyake S."/>
            <person name="Morris K."/>
            <person name="Mottagui-Tabar S."/>
            <person name="Mulder N."/>
            <person name="Nakano N."/>
            <person name="Nakauchi H."/>
            <person name="Ng P."/>
            <person name="Nilsson R."/>
            <person name="Nishiguchi S."/>
            <person name="Nishikawa S."/>
            <person name="Nori F."/>
            <person name="Ohara O."/>
            <person name="Okazaki Y."/>
            <person name="Orlando V."/>
            <person name="Pang K.C."/>
            <person name="Pavan W.J."/>
            <person name="Pavesi G."/>
            <person name="Pesole G."/>
            <person name="Petrovsky N."/>
            <person name="Piazza S."/>
            <person name="Reed J."/>
            <person name="Reid J.F."/>
            <person name="Ring B.Z."/>
            <person name="Ringwald M."/>
            <person name="Rost B."/>
            <person name="Ruan Y."/>
            <person name="Salzberg S.L."/>
            <person name="Sandelin A."/>
            <person name="Schneider C."/>
            <person name="Schoenbach C."/>
            <person name="Sekiguchi K."/>
            <person name="Semple C.A."/>
            <person name="Seno S."/>
            <person name="Sessa L."/>
            <person name="Sheng Y."/>
            <person name="Shibata Y."/>
            <person name="Shimada H."/>
            <person name="Shimada K."/>
            <person name="Silva D."/>
            <person name="Sinclair B."/>
            <person name="Sperling S."/>
            <person name="Stupka E."/>
            <person name="Sugiura K."/>
            <person name="Sultana R."/>
            <person name="Takenaka Y."/>
            <person name="Taki K."/>
            <person name="Tammoja K."/>
            <person name="Tan S.L."/>
            <person name="Tang S."/>
            <person name="Taylor M.S."/>
            <person name="Tegner J."/>
            <person name="Teichmann S.A."/>
            <person name="Ueda H.R."/>
            <person name="van Nimwegen E."/>
            <person name="Verardo R."/>
            <person name="Wei C.L."/>
            <person name="Yagi K."/>
            <person name="Yamanishi H."/>
            <person name="Zabarovsky E."/>
            <person name="Zhu S."/>
            <person name="Zimmer A."/>
            <person name="Hide W."/>
            <person name="Bult C."/>
            <person name="Grimmond S.M."/>
            <person name="Teasdale R.D."/>
            <person name="Liu E.T."/>
            <person name="Brusic V."/>
            <person name="Quackenbush J."/>
            <person name="Wahlestedt C."/>
            <person name="Mattick J.S."/>
            <person name="Hume D.A."/>
            <person name="Kai C."/>
            <person name="Sasaki D."/>
            <person name="Tomaru Y."/>
            <person name="Fukuda S."/>
            <person name="Kanamori-Katayama M."/>
            <person name="Suzuki M."/>
            <person name="Aoki J."/>
            <person name="Arakawa T."/>
            <person name="Iida J."/>
            <person name="Imamura K."/>
            <person name="Itoh M."/>
            <person name="Kato T."/>
            <person name="Kawaji H."/>
            <person name="Kawagashira N."/>
            <person name="Kawashima T."/>
            <person name="Kojima M."/>
            <person name="Kondo S."/>
            <person name="Konno H."/>
            <person name="Nakano K."/>
            <person name="Ninomiya N."/>
            <person name="Nishio T."/>
            <person name="Okada M."/>
            <person name="Plessy C."/>
            <person name="Shibata K."/>
            <person name="Shiraki T."/>
            <person name="Suzuki S."/>
            <person name="Tagami M."/>
            <person name="Waki K."/>
            <person name="Watahiki A."/>
            <person name="Okamura-Oho Y."/>
            <person name="Suzuki H."/>
            <person name="Kawai J."/>
            <person name="Hayashizaki Y."/>
        </authorList>
    </citation>
    <scope>NUCLEOTIDE SEQUENCE [LARGE SCALE MRNA] (ISOFORM 1)</scope>
    <source>
        <strain>NOD</strain>
        <tissue>Thymus</tissue>
    </source>
</reference>
<reference key="4">
    <citation type="journal article" date="2004" name="Genome Res.">
        <title>The status, quality, and expansion of the NIH full-length cDNA project: the Mammalian Gene Collection (MGC).</title>
        <authorList>
            <consortium name="The MGC Project Team"/>
        </authorList>
    </citation>
    <scope>NUCLEOTIDE SEQUENCE [LARGE SCALE MRNA] (ISOFORM 1)</scope>
    <source>
        <strain>Czech II</strain>
        <tissue>Mammary gland</tissue>
    </source>
</reference>
<reference key="5">
    <citation type="journal article" date="2002" name="Nat. Genet.">
        <title>Cbfbeta interacts with Runx2 and has a critical role in bone development.</title>
        <authorList>
            <person name="Kundu M."/>
            <person name="Javed A."/>
            <person name="Jeon J.P."/>
            <person name="Horner A."/>
            <person name="Shum L."/>
            <person name="Eckhaus M."/>
            <person name="Muenke M."/>
            <person name="Lian J.B."/>
            <person name="Yang Y."/>
            <person name="Nuckolls G.H."/>
            <person name="Stein G.S."/>
            <person name="Liu P.P."/>
        </authorList>
    </citation>
    <scope>FUNCTION</scope>
    <scope>SUBCELLULAR LOCATION</scope>
    <scope>INTERACTION WITH RUNX2</scope>
</reference>
<reference key="6">
    <citation type="journal article" date="2010" name="Cell">
        <title>A tissue-specific atlas of mouse protein phosphorylation and expression.</title>
        <authorList>
            <person name="Huttlin E.L."/>
            <person name="Jedrychowski M.P."/>
            <person name="Elias J.E."/>
            <person name="Goswami T."/>
            <person name="Rad R."/>
            <person name="Beausoleil S.A."/>
            <person name="Villen J."/>
            <person name="Haas W."/>
            <person name="Sowa M.E."/>
            <person name="Gygi S.P."/>
        </authorList>
    </citation>
    <scope>IDENTIFICATION BY MASS SPECTROMETRY [LARGE SCALE ANALYSIS]</scope>
    <source>
        <tissue>Brain</tissue>
        <tissue>Heart</tissue>
        <tissue>Kidney</tissue>
        <tissue>Liver</tissue>
        <tissue>Lung</tissue>
        <tissue>Pancreas</tissue>
        <tissue>Spleen</tissue>
        <tissue>Testis</tissue>
    </source>
</reference>
<reference key="7">
    <citation type="journal article" date="2012" name="Cell Death Differ.">
        <title>The histone- and PRMT5-associated protein COPR5 is required for myogenic differentiation.</title>
        <authorList>
            <person name="Paul C."/>
            <person name="Sardet C."/>
            <person name="Fabbrizio E."/>
        </authorList>
    </citation>
    <scope>INTERACTION WITH COPRS</scope>
    <scope>IDENTIFICATION IN A COMPLEX WITH PRMT5 AND RUNX1</scope>
</reference>
<reference key="8">
    <citation type="journal article" date="2001" name="Cell">
        <title>Structural analyses of DNA recognition by the AML1/Runx-1 Runt domain and its allosteric control by CBFbeta.</title>
        <authorList>
            <person name="Tahirov T.H."/>
            <person name="Inoue-Bungo T."/>
            <person name="Morii H."/>
            <person name="Fujikawa A."/>
            <person name="Sasaki M."/>
            <person name="Kimura K."/>
            <person name="Shiina M."/>
            <person name="Sato K."/>
            <person name="Kumasaka T."/>
            <person name="Yamamoto M."/>
            <person name="Ishii S."/>
            <person name="Ogata K."/>
        </authorList>
    </citation>
    <scope>X-RAY CRYSTALLOGRAPHY (2.65 ANGSTROMS) OF 1-141 IN COMPLEX WITH CEBPB; RUNX1 AND DNA</scope>
    <scope>MUTAGENESIS OF VAL-5; ASN-63 AND ASN-104</scope>
</reference>
<reference key="9">
    <citation type="journal article" date="1999" name="Nat. Struct. Biol.">
        <title>Solution structure of core binding factor beta and map of the CBF alpha binding site.</title>
        <authorList>
            <person name="Huang X."/>
            <person name="Peng J.W."/>
            <person name="Speck N.A."/>
            <person name="Bushweller J.H."/>
        </authorList>
    </citation>
    <scope>STRUCTURE BY NMR OF 1-141</scope>
</reference>
<reference key="10">
    <citation type="journal article" date="2001" name="Biochemistry">
        <title>Structure and backbone dynamics of Apo-CBFbeta in solution.</title>
        <authorList>
            <person name="Wolf-Watz M."/>
            <person name="Grundstroem T."/>
            <person name="Haerd T."/>
        </authorList>
    </citation>
    <scope>STRUCTURE BY NMR OF 1-141</scope>
</reference>
<reference key="11">
    <citation type="journal article" date="2008" name="Science">
        <title>Repression of the transcription factor Th-POK by Runx complexes in cytotoxic T cell development.</title>
        <authorList>
            <person name="Setoguchi R."/>
            <person name="Tachibana M."/>
            <person name="Naoe Y."/>
            <person name="Muroi S."/>
            <person name="Akiyama K."/>
            <person name="Tezuka C."/>
            <person name="Okuda T."/>
            <person name="Taniuchi I."/>
        </authorList>
    </citation>
    <scope>FUNCTION</scope>
</reference>
<keyword id="KW-0002">3D-structure</keyword>
<keyword id="KW-0025">Alternative splicing</keyword>
<keyword id="KW-0903">Direct protein sequencing</keyword>
<keyword id="KW-0539">Nucleus</keyword>
<keyword id="KW-0597">Phosphoprotein</keyword>
<keyword id="KW-1185">Reference proteome</keyword>
<comment type="function">
    <text evidence="3 4 5 7 8">Forms the heterodimeric complex core-binding factor (CBF) with RUNX family proteins (RUNX1, RUNX2, and RUNX3) (PubMed:12434156, PubMed:8386878, PubMed:8497254). RUNX members modulate the transcription of their target genes through recognizing the core consensus binding sequence 5'-TGTGGT-3', or very rarely, 5'-TGCGGT-3', within their regulatory regions via their runt domain, while CBFB is a non-DNA-binding regulatory subunit that allosterically enhances the sequence-specific DNA-binding capacity of RUNX (PubMed:12434156, PubMed:8386878, PubMed:8497254). The heterodimers bind to the core site of a number of enhancers and promoters, including murine leukemia virus, polyomavirus enhancer, T-cell receptor enhancers, LCK, IL3 and GM-CSF promoters (PubMed:11257229). CBF complexes repress ZBTB7B transcription factor during cytotoxic (CD8+) T cell development (PubMed:18258917). They bind to RUNX-binding sequence within the ZBTB7B locus acting as transcriptional silencer and allowing for cytotoxic T cell differentiation (PubMed:18258917).</text>
</comment>
<comment type="subunit">
    <text evidence="3 4 6">Heterodimer with RUNX1, RUNX2 and RUNX3 (PubMed:11257229, PubMed:12434156). Interacts with COPRS (PubMed:22193545). Found in a complex with PRMT5 and RUNX1 (PubMed:22193545).</text>
</comment>
<comment type="subcellular location">
    <subcellularLocation>
        <location evidence="4">Nucleus</location>
    </subcellularLocation>
</comment>
<comment type="alternative products">
    <event type="alternative splicing"/>
    <isoform>
        <id>Q08024-1</id>
        <name>1</name>
        <sequence type="displayed"/>
    </isoform>
    <isoform>
        <id>Q08024-2</id>
        <name>2</name>
        <sequence type="described" ref="VSP_004360"/>
    </isoform>
    <isoform>
        <id>Q08024-3</id>
        <name>3</name>
        <sequence type="described" ref="VSP_004359"/>
    </isoform>
    <isoform>
        <id>Q08024-4</id>
        <name>4</name>
        <sequence type="described" ref="VSP_004358"/>
    </isoform>
</comment>
<comment type="tissue specificity">
    <text evidence="8">Expressed in all tissues tested (PubMed:8497254). Highest level in thymus, but also abundantly expressed in muscle, lung and brain (PubMed:8497254).</text>
</comment>
<comment type="miscellaneous">
    <molecule>Isoform 2</molecule>
    <text evidence="12">Major isoform.</text>
</comment>
<comment type="miscellaneous">
    <molecule>Isoform 3</molecule>
    <text evidence="12">Does not dimerize with the alpha subunit.</text>
</comment>
<comment type="miscellaneous">
    <molecule>Isoform 4</molecule>
    <text evidence="12">Does not dimerize with the alpha subunit.</text>
</comment>
<comment type="similarity">
    <text evidence="12">Belongs to the CBF-beta family.</text>
</comment>
<proteinExistence type="evidence at protein level"/>
<name>PEBB_MOUSE</name>
<dbReference type="EMBL" id="D14572">
    <property type="protein sequence ID" value="BAA03426.1"/>
    <property type="molecule type" value="mRNA"/>
</dbReference>
<dbReference type="EMBL" id="D14571">
    <property type="protein sequence ID" value="BAA03425.1"/>
    <property type="molecule type" value="mRNA"/>
</dbReference>
<dbReference type="EMBL" id="D14570">
    <property type="protein sequence ID" value="BAA03424.1"/>
    <property type="molecule type" value="mRNA"/>
</dbReference>
<dbReference type="EMBL" id="D14569">
    <property type="protein sequence ID" value="BAA03423.1"/>
    <property type="molecule type" value="Genomic_DNA"/>
</dbReference>
<dbReference type="EMBL" id="L03305">
    <property type="status" value="NOT_ANNOTATED_CDS"/>
    <property type="molecule type" value="mRNA"/>
</dbReference>
<dbReference type="EMBL" id="L03306">
    <property type="status" value="NOT_ANNOTATED_CDS"/>
    <property type="molecule type" value="mRNA"/>
</dbReference>
<dbReference type="EMBL" id="L03279">
    <property type="status" value="NOT_ANNOTATED_CDS"/>
    <property type="molecule type" value="mRNA"/>
</dbReference>
<dbReference type="EMBL" id="AK089094">
    <property type="protein sequence ID" value="BAC40748.1"/>
    <property type="molecule type" value="mRNA"/>
</dbReference>
<dbReference type="EMBL" id="BC006763">
    <property type="protein sequence ID" value="AAH06763.1"/>
    <property type="molecule type" value="mRNA"/>
</dbReference>
<dbReference type="EMBL" id="BC026749">
    <property type="protein sequence ID" value="AAH26749.1"/>
    <property type="molecule type" value="mRNA"/>
</dbReference>
<dbReference type="EMBL" id="BC040752">
    <property type="protein sequence ID" value="AAH40752.2"/>
    <property type="molecule type" value="mRNA"/>
</dbReference>
<dbReference type="CCDS" id="CCDS22592.1">
    <molecule id="Q08024-1"/>
</dbReference>
<dbReference type="CCDS" id="CCDS52654.1">
    <molecule id="Q08024-2"/>
</dbReference>
<dbReference type="CCDS" id="CCDS52655.1">
    <molecule id="Q08024-3"/>
</dbReference>
<dbReference type="CCDS" id="CCDS52656.1">
    <molecule id="Q08024-4"/>
</dbReference>
<dbReference type="PIR" id="A46107">
    <property type="entry name" value="A46107"/>
</dbReference>
<dbReference type="PIR" id="B48124">
    <property type="entry name" value="B48124"/>
</dbReference>
<dbReference type="RefSeq" id="NP_001154928.1">
    <molecule id="Q08024-4"/>
    <property type="nucleotide sequence ID" value="NM_001161456.1"/>
</dbReference>
<dbReference type="RefSeq" id="NP_001154929.1">
    <molecule id="Q08024-3"/>
    <property type="nucleotide sequence ID" value="NM_001161457.1"/>
</dbReference>
<dbReference type="RefSeq" id="NP_001154930.1">
    <molecule id="Q08024-2"/>
    <property type="nucleotide sequence ID" value="NM_001161458.1"/>
</dbReference>
<dbReference type="RefSeq" id="NP_071704.3">
    <molecule id="Q08024-1"/>
    <property type="nucleotide sequence ID" value="NM_022309.4"/>
</dbReference>
<dbReference type="PDB" id="1ILF">
    <property type="method" value="NMR"/>
    <property type="chains" value="A=1-141"/>
</dbReference>
<dbReference type="PDB" id="1IO4">
    <property type="method" value="X-ray"/>
    <property type="resolution" value="3.00 A"/>
    <property type="chains" value="D=1-141"/>
</dbReference>
<dbReference type="PDB" id="2JHB">
    <property type="method" value="NMR"/>
    <property type="chains" value="A=1-141"/>
</dbReference>
<dbReference type="PDB" id="3WTS">
    <property type="method" value="X-ray"/>
    <property type="resolution" value="2.35 A"/>
    <property type="chains" value="B/G=1-142"/>
</dbReference>
<dbReference type="PDB" id="3WTT">
    <property type="method" value="X-ray"/>
    <property type="resolution" value="2.35 A"/>
    <property type="chains" value="B/G=1-142"/>
</dbReference>
<dbReference type="PDB" id="3WTU">
    <property type="method" value="X-ray"/>
    <property type="resolution" value="2.70 A"/>
    <property type="chains" value="B/G=1-142"/>
</dbReference>
<dbReference type="PDB" id="3WTV">
    <property type="method" value="X-ray"/>
    <property type="resolution" value="2.70 A"/>
    <property type="chains" value="B/G=1-142"/>
</dbReference>
<dbReference type="PDB" id="3WTW">
    <property type="method" value="X-ray"/>
    <property type="resolution" value="2.90 A"/>
    <property type="chains" value="B/G=1-142"/>
</dbReference>
<dbReference type="PDB" id="3WTX">
    <property type="method" value="X-ray"/>
    <property type="resolution" value="2.80 A"/>
    <property type="chains" value="B/G=1-142"/>
</dbReference>
<dbReference type="PDB" id="3WTY">
    <property type="method" value="X-ray"/>
    <property type="resolution" value="2.70 A"/>
    <property type="chains" value="B/G=1-142"/>
</dbReference>
<dbReference type="PDBsum" id="1ILF"/>
<dbReference type="PDBsum" id="1IO4"/>
<dbReference type="PDBsum" id="2JHB"/>
<dbReference type="PDBsum" id="3WTS"/>
<dbReference type="PDBsum" id="3WTT"/>
<dbReference type="PDBsum" id="3WTU"/>
<dbReference type="PDBsum" id="3WTV"/>
<dbReference type="PDBsum" id="3WTW"/>
<dbReference type="PDBsum" id="3WTX"/>
<dbReference type="PDBsum" id="3WTY"/>
<dbReference type="BMRB" id="Q08024"/>
<dbReference type="SMR" id="Q08024"/>
<dbReference type="BioGRID" id="198525">
    <property type="interactions" value="11"/>
</dbReference>
<dbReference type="FunCoup" id="Q08024">
    <property type="interactions" value="3335"/>
</dbReference>
<dbReference type="IntAct" id="Q08024">
    <property type="interactions" value="3"/>
</dbReference>
<dbReference type="STRING" id="10090.ENSMUSP00000059382"/>
<dbReference type="iPTMnet" id="Q08024"/>
<dbReference type="PhosphoSitePlus" id="Q08024"/>
<dbReference type="jPOST" id="Q08024"/>
<dbReference type="PaxDb" id="10090-ENSMUSP00000059382"/>
<dbReference type="PeptideAtlas" id="Q08024"/>
<dbReference type="ProteomicsDB" id="289339">
    <molecule id="Q08024-1"/>
</dbReference>
<dbReference type="ProteomicsDB" id="289340">
    <molecule id="Q08024-2"/>
</dbReference>
<dbReference type="ProteomicsDB" id="289341">
    <molecule id="Q08024-3"/>
</dbReference>
<dbReference type="ProteomicsDB" id="289342">
    <molecule id="Q08024-4"/>
</dbReference>
<dbReference type="Pumba" id="Q08024"/>
<dbReference type="Antibodypedia" id="15619">
    <property type="antibodies" value="430 antibodies from 39 providers"/>
</dbReference>
<dbReference type="DNASU" id="12400"/>
<dbReference type="Ensembl" id="ENSMUST00000052209.9">
    <molecule id="Q08024-1"/>
    <property type="protein sequence ID" value="ENSMUSP00000059382.3"/>
    <property type="gene ID" value="ENSMUSG00000031885.15"/>
</dbReference>
<dbReference type="Ensembl" id="ENSMUST00000109392.9">
    <molecule id="Q08024-2"/>
    <property type="protein sequence ID" value="ENSMUSP00000105019.2"/>
    <property type="gene ID" value="ENSMUSG00000031885.15"/>
</dbReference>
<dbReference type="Ensembl" id="ENSMUST00000109394.3">
    <molecule id="Q08024-4"/>
    <property type="protein sequence ID" value="ENSMUSP00000105021.2"/>
    <property type="gene ID" value="ENSMUSG00000031885.15"/>
</dbReference>
<dbReference type="Ensembl" id="ENSMUST00000109395.8">
    <molecule id="Q08024-3"/>
    <property type="protein sequence ID" value="ENSMUSP00000105022.2"/>
    <property type="gene ID" value="ENSMUSG00000031885.15"/>
</dbReference>
<dbReference type="GeneID" id="12400"/>
<dbReference type="KEGG" id="mmu:12400"/>
<dbReference type="UCSC" id="uc009nbp.2">
    <molecule id="Q08024-1"/>
    <property type="organism name" value="mouse"/>
</dbReference>
<dbReference type="UCSC" id="uc009nbq.2">
    <molecule id="Q08024-2"/>
    <property type="organism name" value="mouse"/>
</dbReference>
<dbReference type="UCSC" id="uc009nbr.2">
    <molecule id="Q08024-4"/>
    <property type="organism name" value="mouse"/>
</dbReference>
<dbReference type="UCSC" id="uc012gjd.1">
    <molecule id="Q08024-3"/>
    <property type="organism name" value="mouse"/>
</dbReference>
<dbReference type="AGR" id="MGI:99851"/>
<dbReference type="CTD" id="865"/>
<dbReference type="MGI" id="MGI:99851">
    <property type="gene designation" value="Cbfb"/>
</dbReference>
<dbReference type="VEuPathDB" id="HostDB:ENSMUSG00000031885"/>
<dbReference type="eggNOG" id="KOG4785">
    <property type="taxonomic scope" value="Eukaryota"/>
</dbReference>
<dbReference type="GeneTree" id="ENSGT00390000018132"/>
<dbReference type="HOGENOM" id="CLU_074992_1_0_1"/>
<dbReference type="InParanoid" id="Q08024"/>
<dbReference type="OMA" id="YAEISMV"/>
<dbReference type="OrthoDB" id="10026505at2759"/>
<dbReference type="PhylomeDB" id="Q08024"/>
<dbReference type="TreeFam" id="TF314675"/>
<dbReference type="Reactome" id="R-MMU-8877330">
    <property type="pathway name" value="RUNX1 and FOXP3 control the development of regulatory T lymphocytes (Tregs)"/>
</dbReference>
<dbReference type="Reactome" id="R-MMU-8878166">
    <property type="pathway name" value="Transcriptional regulation by RUNX2"/>
</dbReference>
<dbReference type="Reactome" id="R-MMU-8931987">
    <property type="pathway name" value="RUNX1 regulates estrogen receptor mediated transcription"/>
</dbReference>
<dbReference type="Reactome" id="R-MMU-8934593">
    <property type="pathway name" value="Regulation of RUNX1 Expression and Activity"/>
</dbReference>
<dbReference type="Reactome" id="R-MMU-8936459">
    <property type="pathway name" value="RUNX1 regulates genes involved in megakaryocyte differentiation and platelet function"/>
</dbReference>
<dbReference type="Reactome" id="R-MMU-8939236">
    <property type="pathway name" value="RUNX1 regulates transcription of genes involved in differentiation of HSCs"/>
</dbReference>
<dbReference type="Reactome" id="R-MMU-8939243">
    <property type="pathway name" value="RUNX1 interacts with co-factors whose precise effect on RUNX1 targets is not known"/>
</dbReference>
<dbReference type="Reactome" id="R-MMU-8939245">
    <property type="pathway name" value="RUNX1 regulates transcription of genes involved in BCR signaling"/>
</dbReference>
<dbReference type="Reactome" id="R-MMU-8939246">
    <property type="pathway name" value="RUNX1 regulates transcription of genes involved in differentiation of myeloid cells"/>
</dbReference>
<dbReference type="Reactome" id="R-MMU-8939247">
    <property type="pathway name" value="RUNX1 regulates transcription of genes involved in interleukin signaling"/>
</dbReference>
<dbReference type="Reactome" id="R-MMU-8941326">
    <property type="pathway name" value="RUNX2 regulates bone development"/>
</dbReference>
<dbReference type="Reactome" id="R-MMU-8941858">
    <property type="pathway name" value="Regulation of RUNX3 expression and activity"/>
</dbReference>
<dbReference type="Reactome" id="R-MMU-8951936">
    <property type="pathway name" value="RUNX3 regulates p14-ARF"/>
</dbReference>
<dbReference type="Reactome" id="R-MMU-9018519">
    <property type="pathway name" value="Estrogen-dependent gene expression"/>
</dbReference>
<dbReference type="BioGRID-ORCS" id="12400">
    <property type="hits" value="18 hits in 84 CRISPR screens"/>
</dbReference>
<dbReference type="ChiTaRS" id="Cbfb">
    <property type="organism name" value="mouse"/>
</dbReference>
<dbReference type="EvolutionaryTrace" id="Q08024"/>
<dbReference type="PRO" id="PR:Q08024"/>
<dbReference type="Proteomes" id="UP000000589">
    <property type="component" value="Chromosome 8"/>
</dbReference>
<dbReference type="RNAct" id="Q08024">
    <property type="molecule type" value="protein"/>
</dbReference>
<dbReference type="Bgee" id="ENSMUSG00000031885">
    <property type="expression patterns" value="Expressed in trigeminal ganglion and 271 other cell types or tissues"/>
</dbReference>
<dbReference type="GO" id="GO:0016513">
    <property type="term" value="C:core-binding factor complex"/>
    <property type="evidence" value="ECO:0000304"/>
    <property type="project" value="UniProtKB"/>
</dbReference>
<dbReference type="GO" id="GO:0005654">
    <property type="term" value="C:nucleoplasm"/>
    <property type="evidence" value="ECO:0000304"/>
    <property type="project" value="Reactome"/>
</dbReference>
<dbReference type="GO" id="GO:0005634">
    <property type="term" value="C:nucleus"/>
    <property type="evidence" value="ECO:0000314"/>
    <property type="project" value="MGI"/>
</dbReference>
<dbReference type="GO" id="GO:0032991">
    <property type="term" value="C:protein-containing complex"/>
    <property type="evidence" value="ECO:0000266"/>
    <property type="project" value="MGI"/>
</dbReference>
<dbReference type="GO" id="GO:0003677">
    <property type="term" value="F:DNA binding"/>
    <property type="evidence" value="ECO:0007669"/>
    <property type="project" value="Ensembl"/>
</dbReference>
<dbReference type="GO" id="GO:0003713">
    <property type="term" value="F:transcription coactivator activity"/>
    <property type="evidence" value="ECO:0007669"/>
    <property type="project" value="InterPro"/>
</dbReference>
<dbReference type="GO" id="GO:0048469">
    <property type="term" value="P:cell maturation"/>
    <property type="evidence" value="ECO:0000315"/>
    <property type="project" value="MGI"/>
</dbReference>
<dbReference type="GO" id="GO:0060216">
    <property type="term" value="P:definitive hemopoiesis"/>
    <property type="evidence" value="ECO:0000315"/>
    <property type="project" value="MGI"/>
</dbReference>
<dbReference type="GO" id="GO:0030098">
    <property type="term" value="P:lymphocyte differentiation"/>
    <property type="evidence" value="ECO:0000315"/>
    <property type="project" value="MGI"/>
</dbReference>
<dbReference type="GO" id="GO:0030099">
    <property type="term" value="P:myeloid cell differentiation"/>
    <property type="evidence" value="ECO:0000315"/>
    <property type="project" value="MGI"/>
</dbReference>
<dbReference type="GO" id="GO:0043371">
    <property type="term" value="P:negative regulation of CD4-positive, alpha-beta T cell differentiation"/>
    <property type="evidence" value="ECO:0000315"/>
    <property type="project" value="UniProtKB"/>
</dbReference>
<dbReference type="GO" id="GO:0000122">
    <property type="term" value="P:negative regulation of transcription by RNA polymerase II"/>
    <property type="evidence" value="ECO:0000315"/>
    <property type="project" value="UniProtKB"/>
</dbReference>
<dbReference type="GO" id="GO:0001503">
    <property type="term" value="P:ossification"/>
    <property type="evidence" value="ECO:0000315"/>
    <property type="project" value="MGI"/>
</dbReference>
<dbReference type="GO" id="GO:0001649">
    <property type="term" value="P:osteoblast differentiation"/>
    <property type="evidence" value="ECO:0000315"/>
    <property type="project" value="MGI"/>
</dbReference>
<dbReference type="GO" id="GO:0043378">
    <property type="term" value="P:positive regulation of CD8-positive, alpha-beta T cell differentiation"/>
    <property type="evidence" value="ECO:0000315"/>
    <property type="project" value="UniProtKB"/>
</dbReference>
<dbReference type="GO" id="GO:0045944">
    <property type="term" value="P:positive regulation of transcription by RNA polymerase II"/>
    <property type="evidence" value="ECO:0000314"/>
    <property type="project" value="MGI"/>
</dbReference>
<dbReference type="GO" id="GO:0000209">
    <property type="term" value="P:protein polyubiquitination"/>
    <property type="evidence" value="ECO:0007669"/>
    <property type="project" value="Ensembl"/>
</dbReference>
<dbReference type="FunFam" id="2.40.250.10:FF:000001">
    <property type="entry name" value="Core-binding factor subunit beta"/>
    <property type="match status" value="1"/>
</dbReference>
<dbReference type="Gene3D" id="2.40.250.10">
    <property type="entry name" value="Core binding factor, beta subunit"/>
    <property type="match status" value="1"/>
</dbReference>
<dbReference type="InterPro" id="IPR003417">
    <property type="entry name" value="CBF_beta"/>
</dbReference>
<dbReference type="InterPro" id="IPR036552">
    <property type="entry name" value="CBF_bsu_sf"/>
</dbReference>
<dbReference type="PANTHER" id="PTHR10276:SF3">
    <property type="entry name" value="CORE-BINDING FACTOR SUBUNIT BETA"/>
    <property type="match status" value="1"/>
</dbReference>
<dbReference type="PANTHER" id="PTHR10276">
    <property type="entry name" value="CORE-BINDING FACTOR, BETA SUBUNIT"/>
    <property type="match status" value="1"/>
</dbReference>
<dbReference type="Pfam" id="PF02312">
    <property type="entry name" value="CBF_beta"/>
    <property type="match status" value="1"/>
</dbReference>
<dbReference type="SUPFAM" id="SSF50723">
    <property type="entry name" value="Core binding factor beta, CBF"/>
    <property type="match status" value="1"/>
</dbReference>
<accession>Q08024</accession>
<accession>Q08025</accession>
<accession>Q62050</accession>
<accession>Q62051</accession>
<accession>Q8C282</accession>
<accession>Q8CGD5</accession>
<sequence>MPRVVPDQRSKFENEEFFRKLSRECEIKYTGFRDRPHEERQTRFQNACRDGRSEIAFVATGTNLSLQFFPASWQGEQRQTPSREYVDLEREAGKVYLKAPMILNGVCVIWKGWIDLHRLDGMGCLEFDEERAQQEDALAQQAFEEARRRTREFEDRDRSHREEMEARRQQDPSPGSNLGGGDDLKLR</sequence>
<gene>
    <name type="primary">Cbfb</name>
    <name type="synonym">Pebp2b</name>
    <name type="synonym">Pebpb2</name>
</gene>
<evidence type="ECO:0000255" key="1"/>
<evidence type="ECO:0000256" key="2">
    <source>
        <dbReference type="SAM" id="MobiDB-lite"/>
    </source>
</evidence>
<evidence type="ECO:0000269" key="3">
    <source>
    </source>
</evidence>
<evidence type="ECO:0000269" key="4">
    <source>
    </source>
</evidence>
<evidence type="ECO:0000269" key="5">
    <source>
    </source>
</evidence>
<evidence type="ECO:0000269" key="6">
    <source>
    </source>
</evidence>
<evidence type="ECO:0000269" key="7">
    <source>
    </source>
</evidence>
<evidence type="ECO:0000269" key="8">
    <source>
    </source>
</evidence>
<evidence type="ECO:0000303" key="9">
    <source>
    </source>
</evidence>
<evidence type="ECO:0000303" key="10">
    <source>
    </source>
</evidence>
<evidence type="ECO:0000303" key="11">
    <source>
    </source>
</evidence>
<evidence type="ECO:0000305" key="12"/>
<evidence type="ECO:0007829" key="13">
    <source>
        <dbReference type="PDB" id="3WTS"/>
    </source>
</evidence>
<evidence type="ECO:0007829" key="14">
    <source>
        <dbReference type="PDB" id="3WTT"/>
    </source>
</evidence>
<feature type="chain" id="PRO_0000058302" description="Core-binding factor subunit beta">
    <location>
        <begin position="1"/>
        <end position="187"/>
    </location>
</feature>
<feature type="region of interest" description="Disordered" evidence="2">
    <location>
        <begin position="139"/>
        <end position="187"/>
    </location>
</feature>
<feature type="compositionally biased region" description="Basic and acidic residues" evidence="2">
    <location>
        <begin position="144"/>
        <end position="170"/>
    </location>
</feature>
<feature type="modified residue" description="Phosphoserine; by CK2" evidence="1">
    <location>
        <position position="10"/>
    </location>
</feature>
<feature type="modified residue" description="Phosphoserine; by PKC" evidence="1">
    <location>
        <position position="159"/>
    </location>
</feature>
<feature type="splice variant" id="VSP_004358" description="In isoform 4." evidence="11">
    <location>
        <begin position="56"/>
        <end position="94"/>
    </location>
</feature>
<feature type="splice variant" id="VSP_004359" description="In isoform 3." evidence="10">
    <location>
        <begin position="134"/>
        <end position="165"/>
    </location>
</feature>
<feature type="splice variant" id="VSP_004360" description="In isoform 2." evidence="10 11">
    <original>ARRQQDPSPGSNLGGGDDLKLR</original>
    <variation>VRVSQLLAVTGKKTARP</variation>
    <location>
        <begin position="166"/>
        <end position="187"/>
    </location>
</feature>
<feature type="mutagenesis site" description="Interferes with heterodimerization." evidence="3">
    <original>V</original>
    <variation>A</variation>
    <location>
        <position position="5"/>
    </location>
</feature>
<feature type="mutagenesis site" description="Interferes with heterodimerization." evidence="3">
    <original>N</original>
    <variation>A</variation>
    <location>
        <position position="63"/>
    </location>
</feature>
<feature type="mutagenesis site" description="Interferes with heterodimerization." evidence="3">
    <original>N</original>
    <variation>A</variation>
    <location>
        <position position="104"/>
    </location>
</feature>
<feature type="sequence conflict" description="In Ref. 3; BAC40748." evidence="12" ref="3">
    <original>P</original>
    <variation>S</variation>
    <location>
        <position position="2"/>
    </location>
</feature>
<feature type="sequence conflict" description="In Ref. 3; BAC40748." evidence="12" ref="3">
    <original>R</original>
    <variation>P</variation>
    <location>
        <position position="40"/>
    </location>
</feature>
<feature type="sequence conflict" description="In Ref. 2; L03279." evidence="12" ref="2">
    <original>D</original>
    <variation>N</variation>
    <location>
        <position position="171"/>
    </location>
</feature>
<feature type="helix" evidence="13">
    <location>
        <begin position="8"/>
        <end position="12"/>
    </location>
</feature>
<feature type="helix" evidence="13">
    <location>
        <begin position="16"/>
        <end position="19"/>
    </location>
</feature>
<feature type="turn" evidence="14">
    <location>
        <begin position="20"/>
        <end position="22"/>
    </location>
</feature>
<feature type="strand" evidence="13">
    <location>
        <begin position="25"/>
        <end position="29"/>
    </location>
</feature>
<feature type="turn" evidence="13">
    <location>
        <begin position="31"/>
        <end position="34"/>
    </location>
</feature>
<feature type="helix" evidence="13">
    <location>
        <begin position="37"/>
        <end position="49"/>
    </location>
</feature>
<feature type="strand" evidence="13">
    <location>
        <begin position="52"/>
        <end position="57"/>
    </location>
</feature>
<feature type="turn" evidence="13">
    <location>
        <begin position="58"/>
        <end position="61"/>
    </location>
</feature>
<feature type="strand" evidence="13">
    <location>
        <begin position="62"/>
        <end position="67"/>
    </location>
</feature>
<feature type="strand" evidence="13">
    <location>
        <begin position="83"/>
        <end position="86"/>
    </location>
</feature>
<feature type="strand" evidence="13">
    <location>
        <begin position="88"/>
        <end position="103"/>
    </location>
</feature>
<feature type="strand" evidence="13">
    <location>
        <begin position="106"/>
        <end position="115"/>
    </location>
</feature>
<feature type="turn" evidence="13">
    <location>
        <begin position="116"/>
        <end position="118"/>
    </location>
</feature>
<feature type="strand" evidence="13">
    <location>
        <begin position="120"/>
        <end position="127"/>
    </location>
</feature>
<feature type="helix" evidence="13">
    <location>
        <begin position="129"/>
        <end position="139"/>
    </location>
</feature>
<protein>
    <recommendedName>
        <fullName>Core-binding factor subunit beta</fullName>
        <shortName evidence="9">CBF-beta</shortName>
    </recommendedName>
    <alternativeName>
        <fullName>Polyomavirus enhancer-binding protein 2 beta subunit</fullName>
        <shortName>PEA2-beta</shortName>
        <shortName>PEBP2-beta</shortName>
    </alternativeName>
    <alternativeName>
        <fullName>SL3-3 enhancer factor 1 subunit beta</fullName>
    </alternativeName>
    <alternativeName>
        <fullName>SL3/AKV core-binding factor beta subunit</fullName>
    </alternativeName>
</protein>